<comment type="function">
    <text evidence="1">FMRFamides and FMRFamide-like peptides are neuropeptides.</text>
</comment>
<comment type="subcellular location">
    <subcellularLocation>
        <location evidence="2">Secreted</location>
    </subcellularLocation>
</comment>
<comment type="tissue specificity">
    <text evidence="4 5">In larvae, expressed in the CNS and thoracic perisymapthetic organs (tPSO) but not in the ring gland or abdominal perisymapthetic organs (aPSO) (at protein level). In adults, expressed in brain and thoracic-abdominal ganglion but not in corpora cardiaca and corpora allata (at protein level).</text>
</comment>
<comment type="developmental stage">
    <text evidence="4 5">Detected in larvae and adults.</text>
</comment>
<comment type="mass spectrometry"/>
<comment type="similarity">
    <text evidence="3">Belongs to the FARP (FMRFamide related peptide) family.</text>
</comment>
<sequence>TPGQDFMRF</sequence>
<keyword id="KW-0027">Amidation</keyword>
<keyword id="KW-0903">Direct protein sequencing</keyword>
<keyword id="KW-0527">Neuropeptide</keyword>
<keyword id="KW-0964">Secreted</keyword>
<protein>
    <recommendedName>
        <fullName evidence="6 7">FMRFamide-like neuropeptide TPGQDFMRF-amide</fullName>
    </recommendedName>
</protein>
<reference evidence="8" key="1">
    <citation type="journal article" date="2011" name="Peptides">
        <title>Neuropeptides associated with the central nervous system of the cabbage root fly, Delia radicum (L).</title>
        <authorList>
            <person name="Audsley N."/>
            <person name="Matthews H.J."/>
            <person name="Down R.E."/>
            <person name="Weaver R.J."/>
        </authorList>
    </citation>
    <scope>PROTEIN SEQUENCE</scope>
    <scope>TISSUE SPECIFICITY</scope>
    <scope>MASS SPECTROMETRY</scope>
    <scope>AMIDATION AT PHE-9</scope>
    <source>
        <tissue evidence="4">Abdominal ganglion</tissue>
        <tissue evidence="4">Brain</tissue>
        <tissue evidence="4">Corpora allata</tissue>
        <tissue evidence="4">Corpora cardiaca</tissue>
    </source>
</reference>
<reference evidence="8" key="2">
    <citation type="journal article" date="2012" name="PLoS ONE">
        <title>Peptidomics of the agriculturally damaging larval stage of the cabbage root fly Delia radicum (Diptera: Anthomyiidae).</title>
        <authorList>
            <person name="Zoephel J."/>
            <person name="Reiher W."/>
            <person name="Rexer K.-H."/>
            <person name="Kahnt J."/>
            <person name="Wegener C."/>
        </authorList>
    </citation>
    <scope>PROTEIN SEQUENCE</scope>
    <scope>TISSUE SPECIFICITY</scope>
    <scope>DEVELOPMENTAL STAGE</scope>
    <scope>MASS SPECTROMETRY</scope>
    <scope>AMIDATION AT PHE-9</scope>
    <source>
        <tissue evidence="5">CNS</tissue>
    </source>
</reference>
<name>FAR7_DELRA</name>
<evidence type="ECO:0000250" key="1">
    <source>
        <dbReference type="UniProtKB" id="P41855"/>
    </source>
</evidence>
<evidence type="ECO:0000250" key="2">
    <source>
        <dbReference type="UniProtKB" id="P41860"/>
    </source>
</evidence>
<evidence type="ECO:0000255" key="3"/>
<evidence type="ECO:0000269" key="4">
    <source>
    </source>
</evidence>
<evidence type="ECO:0000269" key="5">
    <source>
    </source>
</evidence>
<evidence type="ECO:0000303" key="6">
    <source>
    </source>
</evidence>
<evidence type="ECO:0000303" key="7">
    <source>
    </source>
</evidence>
<evidence type="ECO:0000305" key="8"/>
<dbReference type="GO" id="GO:0005576">
    <property type="term" value="C:extracellular region"/>
    <property type="evidence" value="ECO:0007669"/>
    <property type="project" value="UniProtKB-SubCell"/>
</dbReference>
<dbReference type="GO" id="GO:0007218">
    <property type="term" value="P:neuropeptide signaling pathway"/>
    <property type="evidence" value="ECO:0007669"/>
    <property type="project" value="UniProtKB-KW"/>
</dbReference>
<proteinExistence type="evidence at protein level"/>
<organism>
    <name type="scientific">Delia radicum</name>
    <name type="common">Cabbage root fly</name>
    <name type="synonym">Anthomyia brassicae</name>
    <dbReference type="NCBI Taxonomy" id="30064"/>
    <lineage>
        <taxon>Eukaryota</taxon>
        <taxon>Metazoa</taxon>
        <taxon>Ecdysozoa</taxon>
        <taxon>Arthropoda</taxon>
        <taxon>Hexapoda</taxon>
        <taxon>Insecta</taxon>
        <taxon>Pterygota</taxon>
        <taxon>Neoptera</taxon>
        <taxon>Endopterygota</taxon>
        <taxon>Diptera</taxon>
        <taxon>Brachycera</taxon>
        <taxon>Muscomorpha</taxon>
        <taxon>Muscoidea</taxon>
        <taxon>Anthomyiidae</taxon>
        <taxon>Anthomyiinae</taxon>
        <taxon>Delia</taxon>
    </lineage>
</organism>
<feature type="peptide" id="PRO_0000419707" description="FMRFamide-like neuropeptide TPGQDFMRF-amide" evidence="4 5">
    <location>
        <begin position="1"/>
        <end position="9"/>
    </location>
</feature>
<feature type="modified residue" description="Phenylalanine amide" evidence="4 5">
    <location>
        <position position="9"/>
    </location>
</feature>
<accession>B3EWK3</accession>